<organismHost>
    <name type="scientific">Escherichia coli</name>
    <dbReference type="NCBI Taxonomy" id="562"/>
</organismHost>
<reference key="1">
    <citation type="journal article" date="2003" name="Microbiol. Mol. Biol. Rev.">
        <title>Bacteriophage T4 genome.</title>
        <authorList>
            <person name="Miller E.S."/>
            <person name="Kutter E."/>
            <person name="Mosig G."/>
            <person name="Arisaka F."/>
            <person name="Kunisawa T."/>
            <person name="Ruger W."/>
        </authorList>
    </citation>
    <scope>NUCLEOTIDE SEQUENCE [LARGE SCALE GENOMIC DNA]</scope>
</reference>
<keyword id="KW-1185">Reference proteome</keyword>
<accession>P39496</accession>
<sequence>MKAYLETIVVAQKEGGDVSTSVSQIMIEFIDAYAYNKFTETFDAYEKGPKFEIYRTLLPIDY</sequence>
<organism>
    <name type="scientific">Enterobacteria phage T4</name>
    <name type="common">Bacteriophage T4</name>
    <dbReference type="NCBI Taxonomy" id="10665"/>
    <lineage>
        <taxon>Viruses</taxon>
        <taxon>Duplodnaviria</taxon>
        <taxon>Heunggongvirae</taxon>
        <taxon>Uroviricota</taxon>
        <taxon>Caudoviricetes</taxon>
        <taxon>Straboviridae</taxon>
        <taxon>Tevenvirinae</taxon>
        <taxon>Tequatrovirus</taxon>
    </lineage>
</organism>
<name>Y12D_BPT4</name>
<protein>
    <recommendedName>
        <fullName>Uncharacterized 7.2 kDa protein in alt-Gp30 intergenic region</fullName>
    </recommendedName>
</protein>
<dbReference type="EMBL" id="AF158101">
    <property type="protein sequence ID" value="AAD42537.1"/>
    <property type="molecule type" value="Genomic_DNA"/>
</dbReference>
<dbReference type="RefSeq" id="NP_049812.1">
    <property type="nucleotide sequence ID" value="NC_000866.4"/>
</dbReference>
<dbReference type="GeneID" id="1258682"/>
<dbReference type="KEGG" id="vg:1258682"/>
<dbReference type="OrthoDB" id="23528at10239"/>
<dbReference type="Proteomes" id="UP000009087">
    <property type="component" value="Segment"/>
</dbReference>
<dbReference type="InterPro" id="IPR056962">
    <property type="entry name" value="Phage_blade"/>
</dbReference>
<dbReference type="Pfam" id="PF24647">
    <property type="entry name" value="Phage_blade"/>
    <property type="match status" value="1"/>
</dbReference>
<feature type="chain" id="PRO_0000165164" description="Uncharacterized 7.2 kDa protein in alt-Gp30 intergenic region">
    <location>
        <begin position="1"/>
        <end position="62"/>
    </location>
</feature>
<proteinExistence type="predicted"/>
<gene>
    <name type="primary">y12D</name>
    <name type="synonym">alt.1</name>
</gene>